<organism>
    <name type="scientific">Zobellia galactanivorans (strain DSM 12802 / CCUG 47099 / CIP 106680 / NCIMB 13871 / Dsij)</name>
    <dbReference type="NCBI Taxonomy" id="63186"/>
    <lineage>
        <taxon>Bacteria</taxon>
        <taxon>Pseudomonadati</taxon>
        <taxon>Bacteroidota</taxon>
        <taxon>Flavobacteriia</taxon>
        <taxon>Flavobacteriales</taxon>
        <taxon>Flavobacteriaceae</taxon>
        <taxon>Zobellia</taxon>
    </lineage>
</organism>
<feature type="signal peptide" evidence="3">
    <location>
        <begin position="1"/>
        <end position="20"/>
    </location>
</feature>
<feature type="chain" id="PRO_0000422028" description="Beta-agarase D">
    <location>
        <begin position="21"/>
        <end position="477"/>
    </location>
</feature>
<feature type="domain" description="GH16" evidence="4">
    <location>
        <begin position="22"/>
        <end position="378"/>
    </location>
</feature>
<feature type="region of interest" description="Disordered" evidence="5">
    <location>
        <begin position="382"/>
        <end position="402"/>
    </location>
</feature>
<feature type="compositionally biased region" description="Low complexity" evidence="5">
    <location>
        <begin position="382"/>
        <end position="391"/>
    </location>
</feature>
<feature type="active site" description="Nucleophile" evidence="2">
    <location>
        <position position="174"/>
    </location>
</feature>
<feature type="active site" description="Proton donor" evidence="2">
    <location>
        <position position="179"/>
    </location>
</feature>
<feature type="binding site" evidence="2">
    <location>
        <begin position="94"/>
        <end position="104"/>
    </location>
    <ligand>
        <name>substrate</name>
    </ligand>
</feature>
<feature type="binding site" evidence="2">
    <location>
        <begin position="123"/>
        <end position="125"/>
    </location>
    <ligand>
        <name>substrate</name>
    </ligand>
</feature>
<feature type="binding site" evidence="1">
    <location>
        <position position="174"/>
    </location>
    <ligand>
        <name>substrate</name>
    </ligand>
</feature>
<feature type="binding site" evidence="1">
    <location>
        <position position="179"/>
    </location>
    <ligand>
        <name>substrate</name>
    </ligand>
</feature>
<feature type="binding site" evidence="2">
    <location>
        <position position="206"/>
    </location>
    <ligand>
        <name>substrate</name>
    </ligand>
</feature>
<feature type="binding site" evidence="1">
    <location>
        <position position="340"/>
    </location>
    <ligand>
        <name>substrate</name>
    </ligand>
</feature>
<feature type="turn" evidence="9">
    <location>
        <begin position="23"/>
        <end position="26"/>
    </location>
</feature>
<feature type="strand" evidence="9">
    <location>
        <begin position="38"/>
        <end position="41"/>
    </location>
</feature>
<feature type="turn" evidence="9">
    <location>
        <begin position="43"/>
        <end position="45"/>
    </location>
</feature>
<feature type="strand" evidence="9">
    <location>
        <begin position="70"/>
        <end position="74"/>
    </location>
</feature>
<feature type="strand" evidence="9">
    <location>
        <begin position="91"/>
        <end position="93"/>
    </location>
</feature>
<feature type="strand" evidence="9">
    <location>
        <begin position="97"/>
        <end position="101"/>
    </location>
</feature>
<feature type="strand" evidence="9">
    <location>
        <begin position="104"/>
        <end position="110"/>
    </location>
</feature>
<feature type="strand" evidence="9">
    <location>
        <begin position="116"/>
        <end position="120"/>
    </location>
</feature>
<feature type="strand" evidence="9">
    <location>
        <begin position="124"/>
        <end position="130"/>
    </location>
</feature>
<feature type="strand" evidence="9">
    <location>
        <begin position="132"/>
        <end position="134"/>
    </location>
</feature>
<feature type="strand" evidence="9">
    <location>
        <begin position="136"/>
        <end position="141"/>
    </location>
</feature>
<feature type="strand" evidence="9">
    <location>
        <begin position="145"/>
        <end position="154"/>
    </location>
</feature>
<feature type="strand" evidence="9">
    <location>
        <begin position="157"/>
        <end position="167"/>
    </location>
</feature>
<feature type="strand" evidence="9">
    <location>
        <begin position="171"/>
        <end position="180"/>
    </location>
</feature>
<feature type="helix" evidence="9">
    <location>
        <begin position="191"/>
        <end position="194"/>
    </location>
</feature>
<feature type="strand" evidence="9">
    <location>
        <begin position="201"/>
        <end position="205"/>
    </location>
</feature>
<feature type="strand" evidence="9">
    <location>
        <begin position="211"/>
        <end position="213"/>
    </location>
</feature>
<feature type="helix" evidence="9">
    <location>
        <begin position="218"/>
        <end position="220"/>
    </location>
</feature>
<feature type="strand" evidence="9">
    <location>
        <begin position="234"/>
        <end position="243"/>
    </location>
</feature>
<feature type="strand" evidence="9">
    <location>
        <begin position="246"/>
        <end position="251"/>
    </location>
</feature>
<feature type="strand" evidence="9">
    <location>
        <begin position="254"/>
        <end position="260"/>
    </location>
</feature>
<feature type="strand" evidence="9">
    <location>
        <begin position="263"/>
        <end position="267"/>
    </location>
</feature>
<feature type="strand" evidence="9">
    <location>
        <begin position="273"/>
        <end position="278"/>
    </location>
</feature>
<feature type="strand" evidence="9">
    <location>
        <begin position="299"/>
        <end position="304"/>
    </location>
</feature>
<feature type="helix" evidence="9">
    <location>
        <begin position="305"/>
        <end position="311"/>
    </location>
</feature>
<feature type="strand" evidence="9">
    <location>
        <begin position="325"/>
        <end position="328"/>
    </location>
</feature>
<feature type="strand" evidence="9">
    <location>
        <begin position="333"/>
        <end position="340"/>
    </location>
</feature>
<feature type="helix" evidence="9">
    <location>
        <begin position="343"/>
        <end position="347"/>
    </location>
</feature>
<feature type="helix" evidence="9">
    <location>
        <begin position="354"/>
        <end position="357"/>
    </location>
</feature>
<feature type="helix" evidence="9">
    <location>
        <begin position="360"/>
        <end position="363"/>
    </location>
</feature>
<feature type="strand" evidence="9">
    <location>
        <begin position="364"/>
        <end position="376"/>
    </location>
</feature>
<protein>
    <recommendedName>
        <fullName>Beta-agarase D</fullName>
        <ecNumber>3.2.1.81</ecNumber>
    </recommendedName>
</protein>
<dbReference type="EC" id="3.2.1.81"/>
<dbReference type="EMBL" id="FQ073842">
    <property type="protein sequence ID" value="CBM41186.1"/>
    <property type="molecule type" value="Genomic_DNA"/>
</dbReference>
<dbReference type="EMBL" id="FP476056">
    <property type="protein sequence ID" value="CAZ98378.1"/>
    <property type="molecule type" value="Genomic_DNA"/>
</dbReference>
<dbReference type="RefSeq" id="WP_013995566.1">
    <property type="nucleotide sequence ID" value="NC_015844.1"/>
</dbReference>
<dbReference type="PDB" id="4ASM">
    <property type="method" value="X-ray"/>
    <property type="resolution" value="1.50 A"/>
    <property type="chains" value="B=21-377"/>
</dbReference>
<dbReference type="PDBsum" id="4ASM"/>
<dbReference type="SMR" id="D7GXG4"/>
<dbReference type="STRING" id="63186.ZOBELLIA_4243"/>
<dbReference type="CAZy" id="GH16">
    <property type="family name" value="Glycoside Hydrolase Family 16"/>
</dbReference>
<dbReference type="KEGG" id="zga:ZOBELLIA_4243"/>
<dbReference type="PATRIC" id="fig|63186.3.peg.4154"/>
<dbReference type="HOGENOM" id="CLU_037753_0_0_10"/>
<dbReference type="OrthoDB" id="9809583at2"/>
<dbReference type="SABIO-RK" id="D7GXG4"/>
<dbReference type="EvolutionaryTrace" id="D7GXG4"/>
<dbReference type="Proteomes" id="UP000008898">
    <property type="component" value="Chromosome"/>
</dbReference>
<dbReference type="GO" id="GO:0005576">
    <property type="term" value="C:extracellular region"/>
    <property type="evidence" value="ECO:0007669"/>
    <property type="project" value="UniProtKB-SubCell"/>
</dbReference>
<dbReference type="GO" id="GO:0033916">
    <property type="term" value="F:beta-agarase activity"/>
    <property type="evidence" value="ECO:0007669"/>
    <property type="project" value="UniProtKB-EC"/>
</dbReference>
<dbReference type="GO" id="GO:0005975">
    <property type="term" value="P:carbohydrate metabolic process"/>
    <property type="evidence" value="ECO:0007669"/>
    <property type="project" value="InterPro"/>
</dbReference>
<dbReference type="Gene3D" id="2.60.120.200">
    <property type="match status" value="1"/>
</dbReference>
<dbReference type="InterPro" id="IPR013320">
    <property type="entry name" value="ConA-like_dom_sf"/>
</dbReference>
<dbReference type="InterPro" id="IPR000757">
    <property type="entry name" value="GH16"/>
</dbReference>
<dbReference type="InterPro" id="IPR026444">
    <property type="entry name" value="Secre_tail"/>
</dbReference>
<dbReference type="NCBIfam" id="TIGR04183">
    <property type="entry name" value="Por_Secre_tail"/>
    <property type="match status" value="1"/>
</dbReference>
<dbReference type="Pfam" id="PF18962">
    <property type="entry name" value="Por_Secre_tail"/>
    <property type="match status" value="1"/>
</dbReference>
<dbReference type="SUPFAM" id="SSF49899">
    <property type="entry name" value="Concanavalin A-like lectins/glucanases"/>
    <property type="match status" value="2"/>
</dbReference>
<dbReference type="PROSITE" id="PS51762">
    <property type="entry name" value="GH16_2"/>
    <property type="match status" value="1"/>
</dbReference>
<name>AGAD_ZOBGA</name>
<accession>D7GXG4</accession>
<evidence type="ECO:0000250" key="1">
    <source>
        <dbReference type="UniProtKB" id="D7GXG0"/>
    </source>
</evidence>
<evidence type="ECO:0000250" key="2">
    <source>
        <dbReference type="UniProtKB" id="G0L322"/>
    </source>
</evidence>
<evidence type="ECO:0000255" key="3"/>
<evidence type="ECO:0000255" key="4">
    <source>
        <dbReference type="PROSITE-ProRule" id="PRU01098"/>
    </source>
</evidence>
<evidence type="ECO:0000256" key="5">
    <source>
        <dbReference type="SAM" id="MobiDB-lite"/>
    </source>
</evidence>
<evidence type="ECO:0000269" key="6">
    <source>
    </source>
</evidence>
<evidence type="ECO:0000305" key="7"/>
<evidence type="ECO:0000305" key="8">
    <source>
    </source>
</evidence>
<evidence type="ECO:0007829" key="9">
    <source>
        <dbReference type="PDB" id="4ASM"/>
    </source>
</evidence>
<comment type="function">
    <text evidence="6">Cleaves the beta-1,4-linkages between beta-D-galactose and alpha-L-3,6-anhydro-galactose residues in agarose. Cleaves agarose in a random manner with retention of the anomeric-bond configuration, producing beta-anomers that give rise progressively to alpha-anomers when mutarotation takes place. Requires at least 4 consecutive agarose units and is highly intolerant to modifications.</text>
</comment>
<comment type="catalytic activity">
    <reaction evidence="6">
        <text>Hydrolysis of (1-&gt;4)-beta-D-galactosidic linkages in agarose, giving the tetramer as the predominant product.</text>
        <dbReference type="EC" id="3.2.1.81"/>
    </reaction>
</comment>
<comment type="biophysicochemical properties">
    <kinetics>
        <KM evidence="6">6.5 mM for agarose</KM>
        <text>248 kcat is sec(-1).</text>
    </kinetics>
</comment>
<comment type="subcellular location">
    <subcellularLocation>
        <location evidence="8">Secreted</location>
    </subcellularLocation>
</comment>
<comment type="induction">
    <text evidence="6">When cells are grown with the low sulfated agar.</text>
</comment>
<comment type="similarity">
    <text evidence="7">Belongs to the glycosyl hydrolase 16 family.</text>
</comment>
<gene>
    <name type="primary">agaD</name>
    <name type="ordered locus">zobellia_4243</name>
</gene>
<reference key="1">
    <citation type="journal article" date="2010" name="Nature">
        <title>Transfer of carbohydrate-active enzymes from marine bacteria to Japanese gut microbiota.</title>
        <authorList>
            <person name="Hehemann J.H."/>
            <person name="Correc G."/>
            <person name="Barbeyron T."/>
            <person name="Helbert W."/>
            <person name="Czjzek M."/>
            <person name="Michel G."/>
        </authorList>
    </citation>
    <scope>NUCLEOTIDE SEQUENCE [GENOMIC DNA]</scope>
    <source>
        <strain>DSM 12802 / CCUG 47099 / CIP 106680 / KCTC 12921 / NCIMB 13871 / Dsij</strain>
    </source>
</reference>
<reference key="2">
    <citation type="submission" date="2009-07" db="EMBL/GenBank/DDBJ databases">
        <title>Complete genome sequence of Zobellia galactanivorans Dsij.</title>
        <authorList>
            <consortium name="Genoscope - CEA"/>
        </authorList>
    </citation>
    <scope>NUCLEOTIDE SEQUENCE [LARGE SCALE GENOMIC DNA]</scope>
    <source>
        <strain>DSM 12802 / CCUG 47099 / CIP 106680 / KCTC 12921 / NCIMB 13871 / Dsij</strain>
    </source>
</reference>
<reference key="3">
    <citation type="journal article" date="2012" name="J. Biol. Chem.">
        <title>Biochemical and structural characterization of the complex agarolytic enzyme system from the marine bacterium Zobellia galactanivorans.</title>
        <authorList>
            <person name="Hehemann J.H."/>
            <person name="Correc G."/>
            <person name="Thomas F."/>
            <person name="Bernard T."/>
            <person name="Barbeyron T."/>
            <person name="Jam M."/>
            <person name="Helbert W."/>
            <person name="Michel G."/>
            <person name="Czjzek M."/>
        </authorList>
    </citation>
    <scope>X-RAY CRYSTALLOGRAPHY (1.50 ANGSTROMS) OF 21-377</scope>
    <scope>FUNCTION</scope>
    <scope>CATALYTIC ACTIVITY</scope>
    <scope>BIOPHYSICOCHEMICAL PROPERTIES</scope>
    <scope>INDUCTION</scope>
    <scope>SUBCELLULAR LOCATION</scope>
    <source>
        <strain>DSM 12802 / CCUG 47099 / CIP 106680 / KCTC 12921 / NCIMB 13871 / Dsij</strain>
    </source>
</reference>
<sequence length="477" mass="53522">MKRSILLAIIAFLQFFTSYGQYDWDNVPIPANAGAGKTWKLQTAASDDFNYTFNPTNNVVDFGPNGNMKWYNKYHNRPNGQPNNFEGPGPTKWMQNHVAVSGGNLNIWASRIPGATKSFTGSNNTPISRPETRAGCITNKTRVKYPVFVEARVKVMNSTLASDIWLLSPDDTQEIDIMECYGGPGNDNRNSYFASKIHLSHHVFIRPPNFKDYQPADLNSWWGKNGVTQWGGKTIRIGVNWVSPTRLEYFVDGQMVRILDNDAVQTRLADGTWQYTYPAGVTSTGVNGQLIKENGYQKMNIASSLSDAKNKSNISVIDPFNYLNNGRKFSKEMDIIINVEDQSWQAEAYRSPNAAEMANFYDNNLLVDWIRVYKPVNASAANSAETTSTVEKPASFEPQGQPTEKLQVYPVPATDVLNISQSDYVEARVYNLKGWVMLRKDVIDQKIDVSSLKKGIYILEITKATGETVKQKIVISE</sequence>
<proteinExistence type="evidence at protein level"/>
<keyword id="KW-0002">3D-structure</keyword>
<keyword id="KW-0326">Glycosidase</keyword>
<keyword id="KW-0378">Hydrolase</keyword>
<keyword id="KW-1185">Reference proteome</keyword>
<keyword id="KW-0964">Secreted</keyword>
<keyword id="KW-0732">Signal</keyword>